<comment type="subcellular location">
    <subcellularLocation>
        <location evidence="3 4">Secreted</location>
    </subcellularLocation>
</comment>
<comment type="alternative products">
    <event type="alternative splicing"/>
    <isoform>
        <id>Q9JLV9-1</id>
        <name>1</name>
        <sequence type="displayed"/>
    </isoform>
    <isoform>
        <id>Q9JLV9-2</id>
        <name>2</name>
        <sequence type="described" ref="VSP_058802"/>
    </isoform>
</comment>
<comment type="tissue specificity">
    <text evidence="3 4 5">Expressed in placenta (at protein level) (PubMed:10537154, PubMed:10803597, PubMed:16876275). Expressed in the tail hair follicle, with highest expression detected in the keratinocytes of the outer root sheath (PubMed:10803597). Expressed in ear skin with lesser amounts in small intestine (PubMed:10803597). Not detected in brain at 18 dpc, postnatal day 25 or postnatal day 55 (PubMed:16876275).</text>
</comment>
<comment type="developmental stage">
    <text evidence="3 4">In placenta, detected at 8 dpc, peaks at 12 dpc and declines thereafter.</text>
</comment>
<comment type="PTM">
    <text evidence="3 4">N-glycosylated and sialylated.</text>
</comment>
<comment type="similarity">
    <text evidence="7">Belongs to the somatotropin/prolactin family.</text>
</comment>
<gene>
    <name evidence="13" type="primary">Prl2c5</name>
    <name evidence="6 13" type="synonym">Mrp4</name>
    <name evidence="13" type="synonym">Mrpplf4</name>
    <name evidence="13" type="synonym">Plf4</name>
</gene>
<proteinExistence type="evidence at protein level"/>
<name>PR2C5_MOUSE</name>
<keyword id="KW-0025">Alternative splicing</keyword>
<keyword id="KW-1015">Disulfide bond</keyword>
<keyword id="KW-0325">Glycoprotein</keyword>
<keyword id="KW-1185">Reference proteome</keyword>
<keyword id="KW-0964">Secreted</keyword>
<keyword id="KW-0732">Signal</keyword>
<protein>
    <recommendedName>
        <fullName evidence="7">Prolactin-2C5</fullName>
    </recommendedName>
    <alternativeName>
        <fullName evidence="6">Mitogen-regulated protein 4</fullName>
    </alternativeName>
</protein>
<evidence type="ECO:0000250" key="1">
    <source>
        <dbReference type="UniProtKB" id="P01236"/>
    </source>
</evidence>
<evidence type="ECO:0000255" key="2"/>
<evidence type="ECO:0000269" key="3">
    <source>
    </source>
</evidence>
<evidence type="ECO:0000269" key="4">
    <source>
    </source>
</evidence>
<evidence type="ECO:0000269" key="5">
    <source>
    </source>
</evidence>
<evidence type="ECO:0000303" key="6">
    <source>
    </source>
</evidence>
<evidence type="ECO:0000305" key="7"/>
<evidence type="ECO:0000312" key="8">
    <source>
        <dbReference type="EMBL" id="AAF71815.1"/>
    </source>
</evidence>
<evidence type="ECO:0000312" key="9">
    <source>
        <dbReference type="EMBL" id="AAI32515.1"/>
    </source>
</evidence>
<evidence type="ECO:0000312" key="10">
    <source>
        <dbReference type="EMBL" id="BAE26676.1"/>
    </source>
</evidence>
<evidence type="ECO:0000312" key="11">
    <source>
        <dbReference type="EMBL" id="CDW51417.1"/>
    </source>
</evidence>
<evidence type="ECO:0000312" key="12">
    <source>
        <dbReference type="EMBL" id="EDL20564.1"/>
    </source>
</evidence>
<evidence type="ECO:0000312" key="13">
    <source>
        <dbReference type="MGI" id="MGI:1858413"/>
    </source>
</evidence>
<evidence type="ECO:0000312" key="14">
    <source>
        <dbReference type="Proteomes" id="UP000000589"/>
    </source>
</evidence>
<dbReference type="EMBL" id="AF128884">
    <property type="protein sequence ID" value="AAF71815.1"/>
    <property type="molecule type" value="mRNA"/>
</dbReference>
<dbReference type="EMBL" id="AK145824">
    <property type="protein sequence ID" value="BAE26676.1"/>
    <property type="molecule type" value="mRNA"/>
</dbReference>
<dbReference type="EMBL" id="CT030187">
    <property type="status" value="NOT_ANNOTATED_CDS"/>
    <property type="molecule type" value="Genomic_DNA"/>
</dbReference>
<dbReference type="EMBL" id="CH466672">
    <property type="protein sequence ID" value="EDL20564.1"/>
    <property type="molecule type" value="Genomic_DNA"/>
</dbReference>
<dbReference type="EMBL" id="BC132514">
    <property type="protein sequence ID" value="AAI32515.1"/>
    <property type="molecule type" value="mRNA"/>
</dbReference>
<dbReference type="EMBL" id="BC132516">
    <property type="protein sequence ID" value="AAI32517.1"/>
    <property type="molecule type" value="mRNA"/>
</dbReference>
<dbReference type="EMBL" id="LM644170">
    <property type="protein sequence ID" value="CDW51417.1"/>
    <property type="molecule type" value="mRNA"/>
</dbReference>
<dbReference type="CCDS" id="CCDS26242.1">
    <molecule id="Q9JLV9-1"/>
</dbReference>
<dbReference type="CCDS" id="CCDS79164.1">
    <molecule id="Q9JLV9-2"/>
</dbReference>
<dbReference type="RefSeq" id="NP_001298058.1">
    <molecule id="Q9JLV9-2"/>
    <property type="nucleotide sequence ID" value="NM_001311129.1"/>
</dbReference>
<dbReference type="RefSeq" id="NP_862900.1">
    <molecule id="Q9JLV9-1"/>
    <property type="nucleotide sequence ID" value="NM_181852.2"/>
</dbReference>
<dbReference type="SMR" id="Q9JLV9"/>
<dbReference type="FunCoup" id="Q9JLV9">
    <property type="interactions" value="34"/>
</dbReference>
<dbReference type="STRING" id="10090.ENSMUSP00000115024"/>
<dbReference type="GlyCosmos" id="Q9JLV9">
    <property type="glycosylation" value="1 site, No reported glycans"/>
</dbReference>
<dbReference type="GlyGen" id="Q9JLV9">
    <property type="glycosylation" value="1 site"/>
</dbReference>
<dbReference type="PaxDb" id="10090-ENSMUSP00000021778"/>
<dbReference type="ProteomicsDB" id="289387">
    <molecule id="Q9JLV9-1"/>
</dbReference>
<dbReference type="ProteomicsDB" id="289388">
    <molecule id="Q9JLV9-2"/>
</dbReference>
<dbReference type="DNASU" id="107849"/>
<dbReference type="Ensembl" id="ENSMUST00000021778.14">
    <molecule id="Q9JLV9-1"/>
    <property type="protein sequence ID" value="ENSMUSP00000021778.8"/>
    <property type="gene ID" value="ENSMUSG00000055360.14"/>
</dbReference>
<dbReference type="Ensembl" id="ENSMUST00000126540.8">
    <molecule id="Q9JLV9-2"/>
    <property type="protein sequence ID" value="ENSMUSP00000115024.2"/>
    <property type="gene ID" value="ENSMUSG00000055360.14"/>
</dbReference>
<dbReference type="GeneID" id="107849"/>
<dbReference type="KEGG" id="mmu:107849"/>
<dbReference type="UCSC" id="uc007ply.1">
    <molecule id="Q9JLV9-1"/>
    <property type="organism name" value="mouse"/>
</dbReference>
<dbReference type="UCSC" id="uc007plz.1">
    <property type="organism name" value="mouse"/>
</dbReference>
<dbReference type="AGR" id="MGI:1858413"/>
<dbReference type="CTD" id="107849"/>
<dbReference type="MGI" id="MGI:1858413">
    <property type="gene designation" value="Prl2c5"/>
</dbReference>
<dbReference type="VEuPathDB" id="HostDB:ENSMUSG00000055360"/>
<dbReference type="eggNOG" id="ENOG502QYU3">
    <property type="taxonomic scope" value="Eukaryota"/>
</dbReference>
<dbReference type="GeneTree" id="ENSGT00950000182818"/>
<dbReference type="HOGENOM" id="CLU_088274_0_0_1"/>
<dbReference type="InParanoid" id="Q9JLV9"/>
<dbReference type="PhylomeDB" id="Q9JLV9"/>
<dbReference type="TreeFam" id="TF332592"/>
<dbReference type="BioGRID-ORCS" id="107849">
    <property type="hits" value="1 hit in 42 CRISPR screens"/>
</dbReference>
<dbReference type="ChiTaRS" id="Prl2c5">
    <property type="organism name" value="mouse"/>
</dbReference>
<dbReference type="PRO" id="PR:Q9JLV9"/>
<dbReference type="Proteomes" id="UP000000589">
    <property type="component" value="Chromosome 13"/>
</dbReference>
<dbReference type="RNAct" id="Q9JLV9">
    <property type="molecule type" value="protein"/>
</dbReference>
<dbReference type="Bgee" id="ENSMUSG00000055360">
    <property type="expression patterns" value="Expressed in placenta and 10 other cell types or tissues"/>
</dbReference>
<dbReference type="ExpressionAtlas" id="Q9JLV9">
    <property type="expression patterns" value="baseline and differential"/>
</dbReference>
<dbReference type="GO" id="GO:0005615">
    <property type="term" value="C:extracellular space"/>
    <property type="evidence" value="ECO:0000314"/>
    <property type="project" value="MGI"/>
</dbReference>
<dbReference type="GO" id="GO:0005179">
    <property type="term" value="F:hormone activity"/>
    <property type="evidence" value="ECO:0007669"/>
    <property type="project" value="InterPro"/>
</dbReference>
<dbReference type="CDD" id="cd10288">
    <property type="entry name" value="prolactin_like"/>
    <property type="match status" value="1"/>
</dbReference>
<dbReference type="FunFam" id="1.20.1250.10:FF:000047">
    <property type="entry name" value="Growth hormone d21"/>
    <property type="match status" value="1"/>
</dbReference>
<dbReference type="Gene3D" id="1.20.1250.10">
    <property type="match status" value="1"/>
</dbReference>
<dbReference type="InterPro" id="IPR009079">
    <property type="entry name" value="4_helix_cytokine-like_core"/>
</dbReference>
<dbReference type="InterPro" id="IPR001400">
    <property type="entry name" value="Somatotropin/Prolactin"/>
</dbReference>
<dbReference type="InterPro" id="IPR018116">
    <property type="entry name" value="Somatotropin_CS"/>
</dbReference>
<dbReference type="PANTHER" id="PTHR11417:SF39">
    <property type="entry name" value="GROWTH HORMONE D22-RELATED"/>
    <property type="match status" value="1"/>
</dbReference>
<dbReference type="PANTHER" id="PTHR11417">
    <property type="entry name" value="SOMATOTROPIN,PROLACTIN"/>
    <property type="match status" value="1"/>
</dbReference>
<dbReference type="Pfam" id="PF00103">
    <property type="entry name" value="Hormone_1"/>
    <property type="match status" value="1"/>
</dbReference>
<dbReference type="PRINTS" id="PR00836">
    <property type="entry name" value="SOMATOTROPIN"/>
</dbReference>
<dbReference type="SUPFAM" id="SSF47266">
    <property type="entry name" value="4-helical cytokines"/>
    <property type="match status" value="1"/>
</dbReference>
<dbReference type="PROSITE" id="PS00266">
    <property type="entry name" value="SOMATOTROPIN_1"/>
    <property type="match status" value="1"/>
</dbReference>
<dbReference type="PROSITE" id="PS00338">
    <property type="entry name" value="SOMATOTROPIN_2"/>
    <property type="match status" value="1"/>
</dbReference>
<reference evidence="8" key="1">
    <citation type="journal article" date="2000" name="Endocrinology">
        <title>Mrp4, a new mitogen-regulated protein/proliferin gene; unique in this gene family for its expression in the adult mouse tail and ear.</title>
        <authorList>
            <person name="Fassett J.T."/>
            <person name="Hamilton R.T."/>
            <person name="Nilsen-Hamilton M."/>
        </authorList>
    </citation>
    <scope>NUCLEOTIDE SEQUENCE [MRNA] (ISOFORM 1)</scope>
    <scope>SUBCELLULAR LOCATION</scope>
    <scope>TISSUE SPECIFICITY</scope>
    <scope>DEVELOPMENTAL STAGE</scope>
    <scope>GLYCOSYLATION</scope>
    <source>
        <strain evidence="8">CF-1</strain>
        <tissue evidence="8">Placenta</tissue>
    </source>
</reference>
<reference evidence="10" key="2">
    <citation type="journal article" date="2005" name="Science">
        <title>The transcriptional landscape of the mammalian genome.</title>
        <authorList>
            <person name="Carninci P."/>
            <person name="Kasukawa T."/>
            <person name="Katayama S."/>
            <person name="Gough J."/>
            <person name="Frith M.C."/>
            <person name="Maeda N."/>
            <person name="Oyama R."/>
            <person name="Ravasi T."/>
            <person name="Lenhard B."/>
            <person name="Wells C."/>
            <person name="Kodzius R."/>
            <person name="Shimokawa K."/>
            <person name="Bajic V.B."/>
            <person name="Brenner S.E."/>
            <person name="Batalov S."/>
            <person name="Forrest A.R."/>
            <person name="Zavolan M."/>
            <person name="Davis M.J."/>
            <person name="Wilming L.G."/>
            <person name="Aidinis V."/>
            <person name="Allen J.E."/>
            <person name="Ambesi-Impiombato A."/>
            <person name="Apweiler R."/>
            <person name="Aturaliya R.N."/>
            <person name="Bailey T.L."/>
            <person name="Bansal M."/>
            <person name="Baxter L."/>
            <person name="Beisel K.W."/>
            <person name="Bersano T."/>
            <person name="Bono H."/>
            <person name="Chalk A.M."/>
            <person name="Chiu K.P."/>
            <person name="Choudhary V."/>
            <person name="Christoffels A."/>
            <person name="Clutterbuck D.R."/>
            <person name="Crowe M.L."/>
            <person name="Dalla E."/>
            <person name="Dalrymple B.P."/>
            <person name="de Bono B."/>
            <person name="Della Gatta G."/>
            <person name="di Bernardo D."/>
            <person name="Down T."/>
            <person name="Engstrom P."/>
            <person name="Fagiolini M."/>
            <person name="Faulkner G."/>
            <person name="Fletcher C.F."/>
            <person name="Fukushima T."/>
            <person name="Furuno M."/>
            <person name="Futaki S."/>
            <person name="Gariboldi M."/>
            <person name="Georgii-Hemming P."/>
            <person name="Gingeras T.R."/>
            <person name="Gojobori T."/>
            <person name="Green R.E."/>
            <person name="Gustincich S."/>
            <person name="Harbers M."/>
            <person name="Hayashi Y."/>
            <person name="Hensch T.K."/>
            <person name="Hirokawa N."/>
            <person name="Hill D."/>
            <person name="Huminiecki L."/>
            <person name="Iacono M."/>
            <person name="Ikeo K."/>
            <person name="Iwama A."/>
            <person name="Ishikawa T."/>
            <person name="Jakt M."/>
            <person name="Kanapin A."/>
            <person name="Katoh M."/>
            <person name="Kawasawa Y."/>
            <person name="Kelso J."/>
            <person name="Kitamura H."/>
            <person name="Kitano H."/>
            <person name="Kollias G."/>
            <person name="Krishnan S.P."/>
            <person name="Kruger A."/>
            <person name="Kummerfeld S.K."/>
            <person name="Kurochkin I.V."/>
            <person name="Lareau L.F."/>
            <person name="Lazarevic D."/>
            <person name="Lipovich L."/>
            <person name="Liu J."/>
            <person name="Liuni S."/>
            <person name="McWilliam S."/>
            <person name="Madan Babu M."/>
            <person name="Madera M."/>
            <person name="Marchionni L."/>
            <person name="Matsuda H."/>
            <person name="Matsuzawa S."/>
            <person name="Miki H."/>
            <person name="Mignone F."/>
            <person name="Miyake S."/>
            <person name="Morris K."/>
            <person name="Mottagui-Tabar S."/>
            <person name="Mulder N."/>
            <person name="Nakano N."/>
            <person name="Nakauchi H."/>
            <person name="Ng P."/>
            <person name="Nilsson R."/>
            <person name="Nishiguchi S."/>
            <person name="Nishikawa S."/>
            <person name="Nori F."/>
            <person name="Ohara O."/>
            <person name="Okazaki Y."/>
            <person name="Orlando V."/>
            <person name="Pang K.C."/>
            <person name="Pavan W.J."/>
            <person name="Pavesi G."/>
            <person name="Pesole G."/>
            <person name="Petrovsky N."/>
            <person name="Piazza S."/>
            <person name="Reed J."/>
            <person name="Reid J.F."/>
            <person name="Ring B.Z."/>
            <person name="Ringwald M."/>
            <person name="Rost B."/>
            <person name="Ruan Y."/>
            <person name="Salzberg S.L."/>
            <person name="Sandelin A."/>
            <person name="Schneider C."/>
            <person name="Schoenbach C."/>
            <person name="Sekiguchi K."/>
            <person name="Semple C.A."/>
            <person name="Seno S."/>
            <person name="Sessa L."/>
            <person name="Sheng Y."/>
            <person name="Shibata Y."/>
            <person name="Shimada H."/>
            <person name="Shimada K."/>
            <person name="Silva D."/>
            <person name="Sinclair B."/>
            <person name="Sperling S."/>
            <person name="Stupka E."/>
            <person name="Sugiura K."/>
            <person name="Sultana R."/>
            <person name="Takenaka Y."/>
            <person name="Taki K."/>
            <person name="Tammoja K."/>
            <person name="Tan S.L."/>
            <person name="Tang S."/>
            <person name="Taylor M.S."/>
            <person name="Tegner J."/>
            <person name="Teichmann S.A."/>
            <person name="Ueda H.R."/>
            <person name="van Nimwegen E."/>
            <person name="Verardo R."/>
            <person name="Wei C.L."/>
            <person name="Yagi K."/>
            <person name="Yamanishi H."/>
            <person name="Zabarovsky E."/>
            <person name="Zhu S."/>
            <person name="Zimmer A."/>
            <person name="Hide W."/>
            <person name="Bult C."/>
            <person name="Grimmond S.M."/>
            <person name="Teasdale R.D."/>
            <person name="Liu E.T."/>
            <person name="Brusic V."/>
            <person name="Quackenbush J."/>
            <person name="Wahlestedt C."/>
            <person name="Mattick J.S."/>
            <person name="Hume D.A."/>
            <person name="Kai C."/>
            <person name="Sasaki D."/>
            <person name="Tomaru Y."/>
            <person name="Fukuda S."/>
            <person name="Kanamori-Katayama M."/>
            <person name="Suzuki M."/>
            <person name="Aoki J."/>
            <person name="Arakawa T."/>
            <person name="Iida J."/>
            <person name="Imamura K."/>
            <person name="Itoh M."/>
            <person name="Kato T."/>
            <person name="Kawaji H."/>
            <person name="Kawagashira N."/>
            <person name="Kawashima T."/>
            <person name="Kojima M."/>
            <person name="Kondo S."/>
            <person name="Konno H."/>
            <person name="Nakano K."/>
            <person name="Ninomiya N."/>
            <person name="Nishio T."/>
            <person name="Okada M."/>
            <person name="Plessy C."/>
            <person name="Shibata K."/>
            <person name="Shiraki T."/>
            <person name="Suzuki S."/>
            <person name="Tagami M."/>
            <person name="Waki K."/>
            <person name="Watahiki A."/>
            <person name="Okamura-Oho Y."/>
            <person name="Suzuki H."/>
            <person name="Kawai J."/>
            <person name="Hayashizaki Y."/>
        </authorList>
    </citation>
    <scope>NUCLEOTIDE SEQUENCE [LARGE SCALE MRNA] (ISOFORM 2)</scope>
    <source>
        <strain evidence="10">C57BL/6J</strain>
        <tissue evidence="10">Placenta</tissue>
    </source>
</reference>
<reference evidence="14" key="3">
    <citation type="journal article" date="2009" name="PLoS Biol.">
        <title>Lineage-specific biology revealed by a finished genome assembly of the mouse.</title>
        <authorList>
            <person name="Church D.M."/>
            <person name="Goodstadt L."/>
            <person name="Hillier L.W."/>
            <person name="Zody M.C."/>
            <person name="Goldstein S."/>
            <person name="She X."/>
            <person name="Bult C.J."/>
            <person name="Agarwala R."/>
            <person name="Cherry J.L."/>
            <person name="DiCuccio M."/>
            <person name="Hlavina W."/>
            <person name="Kapustin Y."/>
            <person name="Meric P."/>
            <person name="Maglott D."/>
            <person name="Birtle Z."/>
            <person name="Marques A.C."/>
            <person name="Graves T."/>
            <person name="Zhou S."/>
            <person name="Teague B."/>
            <person name="Potamousis K."/>
            <person name="Churas C."/>
            <person name="Place M."/>
            <person name="Herschleb J."/>
            <person name="Runnheim R."/>
            <person name="Forrest D."/>
            <person name="Amos-Landgraf J."/>
            <person name="Schwartz D.C."/>
            <person name="Cheng Z."/>
            <person name="Lindblad-Toh K."/>
            <person name="Eichler E.E."/>
            <person name="Ponting C.P."/>
        </authorList>
    </citation>
    <scope>NUCLEOTIDE SEQUENCE [LARGE SCALE GENOMIC DNA]</scope>
    <source>
        <strain evidence="14">C57BL/6J</strain>
    </source>
</reference>
<reference evidence="12" key="4">
    <citation type="submission" date="2005-07" db="EMBL/GenBank/DDBJ databases">
        <authorList>
            <person name="Mural R.J."/>
            <person name="Adams M.D."/>
            <person name="Myers E.W."/>
            <person name="Smith H.O."/>
            <person name="Venter J.C."/>
        </authorList>
    </citation>
    <scope>NUCLEOTIDE SEQUENCE [LARGE SCALE GENOMIC DNA]</scope>
</reference>
<reference evidence="9" key="5">
    <citation type="journal article" date="2004" name="Genome Res.">
        <title>The status, quality, and expansion of the NIH full-length cDNA project: the Mammalian Gene Collection (MGC).</title>
        <authorList>
            <consortium name="The MGC Project Team"/>
        </authorList>
    </citation>
    <scope>NUCLEOTIDE SEQUENCE [LARGE SCALE MRNA] (ISOFORM 1)</scope>
    <source>
        <tissue evidence="9">Embryo</tissue>
    </source>
</reference>
<reference evidence="7" key="6">
    <citation type="journal article" date="1999" name="Endocrinology">
        <title>Signaling between the placenta and the uterus involving the mitogen-regulated protein/proliferins.</title>
        <authorList>
            <person name="Fang Y."/>
            <person name="Lepont P."/>
            <person name="Fassett J.T."/>
            <person name="Ford S.P."/>
            <person name="Mubaidin A."/>
            <person name="Hamilton R.T."/>
            <person name="Nilsen-Hamilton M."/>
        </authorList>
    </citation>
    <scope>SUBCELLULAR LOCATION</scope>
    <scope>TISSUE SPECIFICITY</scope>
    <scope>DEVELOPMENTAL STAGE</scope>
    <scope>GLYCOSYLATION</scope>
</reference>
<reference evidence="7" key="7">
    <citation type="journal article" date="2006" name="Neurosci. Res.">
        <title>Proliferin enhances microvilli formation and cell growth of neuroblastoma cells.</title>
        <authorList>
            <person name="Wang J.W."/>
            <person name="Jiang Y.N."/>
            <person name="Huang C.Y."/>
            <person name="Huang P.Y."/>
            <person name="Huang M.C."/>
            <person name="Cheng W.T."/>
            <person name="Shen C.K."/>
            <person name="Ju Y.T."/>
        </authorList>
    </citation>
    <scope>TISSUE SPECIFICITY</scope>
</reference>
<reference evidence="11" key="8">
    <citation type="journal article" date="2015" name="Genom Data">
        <title>Third party data gene data set of eutherian growth hormone genes.</title>
        <authorList>
            <person name="Premzl M."/>
        </authorList>
    </citation>
    <scope>IDENTIFICATION</scope>
</reference>
<sequence length="222" mass="25424">MLPSLIQPCSWILLLLLVNSSLLWKNVASLPMCAMRNDRCFMFFEDTFELAGSLSHNISIEVSELFTEFEKHYSNVPGLRDKSPMRCHTSFLPTPENKEQARHIRYEALLKSGDMILDAWENPLDYLVSELSTIKNVPDIIISKATDIKKKINAVQNGVNALMSTMNGDEENKNPAWFLQSDNEDARIRSSYGMISCLDNDFKKVDIYLNILKCYMLKIDNC</sequence>
<organism evidence="8">
    <name type="scientific">Mus musculus</name>
    <name type="common">Mouse</name>
    <dbReference type="NCBI Taxonomy" id="10090"/>
    <lineage>
        <taxon>Eukaryota</taxon>
        <taxon>Metazoa</taxon>
        <taxon>Chordata</taxon>
        <taxon>Craniata</taxon>
        <taxon>Vertebrata</taxon>
        <taxon>Euteleostomi</taxon>
        <taxon>Mammalia</taxon>
        <taxon>Eutheria</taxon>
        <taxon>Euarchontoglires</taxon>
        <taxon>Glires</taxon>
        <taxon>Rodentia</taxon>
        <taxon>Myomorpha</taxon>
        <taxon>Muroidea</taxon>
        <taxon>Muridae</taxon>
        <taxon>Murinae</taxon>
        <taxon>Mus</taxon>
        <taxon>Mus</taxon>
    </lineage>
</organism>
<feature type="signal peptide" evidence="2">
    <location>
        <begin position="1"/>
        <end position="29"/>
    </location>
</feature>
<feature type="chain" id="PRO_5008180054" description="Prolactin-2C5" evidence="2">
    <location>
        <begin position="30"/>
        <end position="222"/>
    </location>
</feature>
<feature type="glycosylation site" description="N-linked (GlcNAc...) asparagine" evidence="2">
    <location>
        <position position="57"/>
    </location>
</feature>
<feature type="disulfide bond" evidence="1">
    <location>
        <begin position="33"/>
        <end position="40"/>
    </location>
</feature>
<feature type="disulfide bond" evidence="1">
    <location>
        <begin position="87"/>
        <end position="197"/>
    </location>
</feature>
<feature type="disulfide bond" evidence="1">
    <location>
        <begin position="214"/>
        <end position="222"/>
    </location>
</feature>
<feature type="splice variant" id="VSP_058802" description="In isoform 2." evidence="7">
    <original>LPSLIQPCSW</original>
    <variation>HSAFMDLCFLKRG</variation>
    <location>
        <begin position="2"/>
        <end position="11"/>
    </location>
</feature>
<accession>Q9JLV9</accession>
<accession>Q3UKX5</accession>